<organism>
    <name type="scientific">Halobacterium salinarum (strain ATCC 700922 / JCM 11081 / NRC-1)</name>
    <name type="common">Halobacterium halobium</name>
    <dbReference type="NCBI Taxonomy" id="64091"/>
    <lineage>
        <taxon>Archaea</taxon>
        <taxon>Methanobacteriati</taxon>
        <taxon>Methanobacteriota</taxon>
        <taxon>Stenosarchaea group</taxon>
        <taxon>Halobacteria</taxon>
        <taxon>Halobacteriales</taxon>
        <taxon>Halobacteriaceae</taxon>
        <taxon>Halobacterium</taxon>
        <taxon>Halobacterium salinarum NRC-34001</taxon>
    </lineage>
</organism>
<proteinExistence type="inferred from homology"/>
<evidence type="ECO:0000250" key="1"/>
<evidence type="ECO:0000255" key="2"/>
<evidence type="ECO:0000256" key="3">
    <source>
        <dbReference type="SAM" id="MobiDB-lite"/>
    </source>
</evidence>
<evidence type="ECO:0000305" key="4"/>
<comment type="function">
    <text evidence="1">May be part of a transduction pathway connecting light to cell division.</text>
</comment>
<comment type="similarity">
    <text evidence="4">Belongs to the AAA ATPase family. CDC48 subfamily.</text>
</comment>
<reference key="1">
    <citation type="submission" date="1994-06" db="EMBL/GenBank/DDBJ databases">
        <authorList>
            <person name="Bibikov S.I."/>
            <person name="Oesterhelt D."/>
        </authorList>
    </citation>
    <scope>NUCLEOTIDE SEQUENCE [GENOMIC DNA]</scope>
    <source>
        <strain>R1M1</strain>
    </source>
</reference>
<reference key="2">
    <citation type="journal article" date="2000" name="Proc. Natl. Acad. Sci. U.S.A.">
        <title>Genome sequence of Halobacterium species NRC-1.</title>
        <authorList>
            <person name="Ng W.V."/>
            <person name="Kennedy S.P."/>
            <person name="Mahairas G.G."/>
            <person name="Berquist B."/>
            <person name="Pan M."/>
            <person name="Shukla H.D."/>
            <person name="Lasky S.R."/>
            <person name="Baliga N.S."/>
            <person name="Thorsson V."/>
            <person name="Sbrogna J."/>
            <person name="Swartzell S."/>
            <person name="Weir D."/>
            <person name="Hall J."/>
            <person name="Dahl T.A."/>
            <person name="Welti R."/>
            <person name="Goo Y.A."/>
            <person name="Leithauser B."/>
            <person name="Keller K."/>
            <person name="Cruz R."/>
            <person name="Danson M.J."/>
            <person name="Hough D.W."/>
            <person name="Maddocks D.G."/>
            <person name="Jablonski P.E."/>
            <person name="Krebs M.P."/>
            <person name="Angevine C.M."/>
            <person name="Dale H."/>
            <person name="Isenbarger T.A."/>
            <person name="Peck R.F."/>
            <person name="Pohlschroder M."/>
            <person name="Spudich J.L."/>
            <person name="Jung K.-H."/>
            <person name="Alam M."/>
            <person name="Freitas T."/>
            <person name="Hou S."/>
            <person name="Daniels C.J."/>
            <person name="Dennis P.P."/>
            <person name="Omer A.D."/>
            <person name="Ebhardt H."/>
            <person name="Lowe T.M."/>
            <person name="Liang P."/>
            <person name="Riley M."/>
            <person name="Hood L."/>
            <person name="DasSarma S."/>
        </authorList>
    </citation>
    <scope>NUCLEOTIDE SEQUENCE [LARGE SCALE GENOMIC DNA]</scope>
    <source>
        <strain>ATCC 700922 / JCM 11081 / NRC-1</strain>
    </source>
</reference>
<name>CDCH_HALSA</name>
<gene>
    <name type="primary">cdcH</name>
    <name type="synonym">cdc48c</name>
    <name type="ordered locus">VNG_1667G</name>
</gene>
<accession>Q9HPF0</accession>
<accession>P46464</accession>
<keyword id="KW-0067">ATP-binding</keyword>
<keyword id="KW-0547">Nucleotide-binding</keyword>
<keyword id="KW-1185">Reference proteome</keyword>
<keyword id="KW-0677">Repeat</keyword>
<dbReference type="EMBL" id="X79560">
    <property type="protein sequence ID" value="CAA56097.1"/>
    <property type="molecule type" value="Genomic_DNA"/>
</dbReference>
<dbReference type="EMBL" id="AE004437">
    <property type="protein sequence ID" value="AAG19919.1"/>
    <property type="molecule type" value="Genomic_DNA"/>
</dbReference>
<dbReference type="PIR" id="C84319">
    <property type="entry name" value="C84319"/>
</dbReference>
<dbReference type="PIR" id="S47018">
    <property type="entry name" value="S47018"/>
</dbReference>
<dbReference type="RefSeq" id="WP_010903216.1">
    <property type="nucleotide sequence ID" value="NC_002607.1"/>
</dbReference>
<dbReference type="SMR" id="Q9HPF0"/>
<dbReference type="FunCoup" id="Q9HPF0">
    <property type="interactions" value="82"/>
</dbReference>
<dbReference type="STRING" id="64091.VNG_1667G"/>
<dbReference type="PaxDb" id="64091-VNG_1667G"/>
<dbReference type="KEGG" id="hal:VNG_1667G"/>
<dbReference type="PATRIC" id="fig|64091.14.peg.1270"/>
<dbReference type="HOGENOM" id="CLU_000688_12_2_2"/>
<dbReference type="InParanoid" id="Q9HPF0"/>
<dbReference type="OrthoDB" id="77269at2157"/>
<dbReference type="PhylomeDB" id="Q9HPF0"/>
<dbReference type="Proteomes" id="UP000000554">
    <property type="component" value="Chromosome"/>
</dbReference>
<dbReference type="GO" id="GO:0005524">
    <property type="term" value="F:ATP binding"/>
    <property type="evidence" value="ECO:0007669"/>
    <property type="project" value="UniProtKB-KW"/>
</dbReference>
<dbReference type="GO" id="GO:0016887">
    <property type="term" value="F:ATP hydrolysis activity"/>
    <property type="evidence" value="ECO:0000318"/>
    <property type="project" value="GO_Central"/>
</dbReference>
<dbReference type="CDD" id="cd19519">
    <property type="entry name" value="RecA-like_CDC48_r1-like"/>
    <property type="match status" value="1"/>
</dbReference>
<dbReference type="CDD" id="cd19529">
    <property type="entry name" value="RecA-like_VCP_r2"/>
    <property type="match status" value="1"/>
</dbReference>
<dbReference type="FunFam" id="2.40.40.20:FF:000007">
    <property type="entry name" value="AAA family ATPase"/>
    <property type="match status" value="1"/>
</dbReference>
<dbReference type="FunFam" id="3.10.330.10:FF:000005">
    <property type="entry name" value="AAA family ATPase"/>
    <property type="match status" value="1"/>
</dbReference>
<dbReference type="FunFam" id="1.10.8.60:FF:000057">
    <property type="entry name" value="AAA family ATPase, CDC48 subfamily"/>
    <property type="match status" value="1"/>
</dbReference>
<dbReference type="FunFam" id="3.40.50.300:FF:000018">
    <property type="entry name" value="Cell division control 48"/>
    <property type="match status" value="1"/>
</dbReference>
<dbReference type="FunFam" id="3.40.50.300:FF:000012">
    <property type="entry name" value="Transitional endoplasmic reticulum ATPase"/>
    <property type="match status" value="1"/>
</dbReference>
<dbReference type="Gene3D" id="1.10.8.60">
    <property type="match status" value="2"/>
</dbReference>
<dbReference type="Gene3D" id="2.40.40.20">
    <property type="match status" value="1"/>
</dbReference>
<dbReference type="Gene3D" id="3.10.330.10">
    <property type="match status" value="1"/>
</dbReference>
<dbReference type="Gene3D" id="3.40.50.300">
    <property type="entry name" value="P-loop containing nucleotide triphosphate hydrolases"/>
    <property type="match status" value="2"/>
</dbReference>
<dbReference type="InterPro" id="IPR003593">
    <property type="entry name" value="AAA+_ATPase"/>
</dbReference>
<dbReference type="InterPro" id="IPR005938">
    <property type="entry name" value="AAA_ATPase_CDC48"/>
</dbReference>
<dbReference type="InterPro" id="IPR050168">
    <property type="entry name" value="AAA_ATPase_domain"/>
</dbReference>
<dbReference type="InterPro" id="IPR041569">
    <property type="entry name" value="AAA_lid_3"/>
</dbReference>
<dbReference type="InterPro" id="IPR009010">
    <property type="entry name" value="Asp_de-COase-like_dom_sf"/>
</dbReference>
<dbReference type="InterPro" id="IPR003959">
    <property type="entry name" value="ATPase_AAA_core"/>
</dbReference>
<dbReference type="InterPro" id="IPR003960">
    <property type="entry name" value="ATPase_AAA_CS"/>
</dbReference>
<dbReference type="InterPro" id="IPR004201">
    <property type="entry name" value="Cdc48_dom2"/>
</dbReference>
<dbReference type="InterPro" id="IPR029067">
    <property type="entry name" value="CDC48_domain_2-like_sf"/>
</dbReference>
<dbReference type="InterPro" id="IPR003338">
    <property type="entry name" value="CDC4_N-term_subdom"/>
</dbReference>
<dbReference type="InterPro" id="IPR027417">
    <property type="entry name" value="P-loop_NTPase"/>
</dbReference>
<dbReference type="NCBIfam" id="TIGR01243">
    <property type="entry name" value="CDC48"/>
    <property type="match status" value="1"/>
</dbReference>
<dbReference type="PANTHER" id="PTHR23077">
    <property type="entry name" value="AAA-FAMILY ATPASE"/>
    <property type="match status" value="1"/>
</dbReference>
<dbReference type="PANTHER" id="PTHR23077:SF201">
    <property type="entry name" value="PROTEIN CDCH"/>
    <property type="match status" value="1"/>
</dbReference>
<dbReference type="Pfam" id="PF00004">
    <property type="entry name" value="AAA"/>
    <property type="match status" value="2"/>
</dbReference>
<dbReference type="Pfam" id="PF17862">
    <property type="entry name" value="AAA_lid_3"/>
    <property type="match status" value="2"/>
</dbReference>
<dbReference type="Pfam" id="PF02933">
    <property type="entry name" value="CDC48_2"/>
    <property type="match status" value="1"/>
</dbReference>
<dbReference type="Pfam" id="PF02359">
    <property type="entry name" value="CDC48_N"/>
    <property type="match status" value="1"/>
</dbReference>
<dbReference type="SMART" id="SM00382">
    <property type="entry name" value="AAA"/>
    <property type="match status" value="2"/>
</dbReference>
<dbReference type="SMART" id="SM01072">
    <property type="entry name" value="CDC48_2"/>
    <property type="match status" value="1"/>
</dbReference>
<dbReference type="SMART" id="SM01073">
    <property type="entry name" value="CDC48_N"/>
    <property type="match status" value="1"/>
</dbReference>
<dbReference type="SUPFAM" id="SSF50692">
    <property type="entry name" value="ADC-like"/>
    <property type="match status" value="1"/>
</dbReference>
<dbReference type="SUPFAM" id="SSF54585">
    <property type="entry name" value="Cdc48 domain 2-like"/>
    <property type="match status" value="1"/>
</dbReference>
<dbReference type="SUPFAM" id="SSF52540">
    <property type="entry name" value="P-loop containing nucleoside triphosphate hydrolases"/>
    <property type="match status" value="2"/>
</dbReference>
<dbReference type="PROSITE" id="PS00674">
    <property type="entry name" value="AAA"/>
    <property type="match status" value="2"/>
</dbReference>
<protein>
    <recommendedName>
        <fullName>Protein CdcH</fullName>
    </recommendedName>
</protein>
<sequence>MNEVQLEVAKAYPNDSGRGIARLDPDTLLHLKLSPGDIIEIEGAETTAAKVWRADRQDWNTDTIRIDGFTRQNAEVGIGERVKIRKADAEKADTLVLAPPEEASVQFGSDAAGMVKRQILKRPVVARDIVPVMSSTNHPFMRSPGQAIPLIAVETEPEGVCLVTEDTDVELREEPISGFERTGGGITYEDIGGLENEIQRVREMVELPMKHPQIFQKLGIEPPQGVLLHGPPGTGKTLLAKAVANETSASFFSIAGPEIISKYYGESEQQLREIFEDAKDDSPSIIFIDELDSIAPKREDVTGEVERRVVAQLLTMMDGLEGRGQVIVIAATNRVDAVDPALRRPGRFDREIEIGVPDEIGREEILKIHTRGMPLSDDVNLSTLADDTHGFVGADIESLSKEAAMRALRRYLPEIDLDEEDIPPSLIDRMIVKREDFKGALSEVEPSAMREVLVELPKITWDDVGGLTEAKNNVKESVEWPLNQPEKFTRMGVEPPAGVLLYGPPGTGKTLMAKAVANETNANFISVRGPQLLSKWVGESEKAIRQTFRKARQVAPTVIFFDELDSLAPGRGQTGGNNVSERVVNQLLTELDGLEEMEEVMVIAATNRPDIIDPALIRSGRFDRLVQVGQPGIEGREQILKIHTQDTPLAADVSLRELAERADGYVGSDLANIAREAAIEALRDDEDADDVGMAHFRAAMENVRPTITDDLMEYYDQVEDQFKGSQGPNVNSRQGSEHIGFQ</sequence>
<feature type="chain" id="PRO_0000084622" description="Protein CdcH">
    <location>
        <begin position="1"/>
        <end position="742"/>
    </location>
</feature>
<feature type="region of interest" description="Disordered" evidence="3">
    <location>
        <begin position="722"/>
        <end position="742"/>
    </location>
</feature>
<feature type="compositionally biased region" description="Polar residues" evidence="3">
    <location>
        <begin position="723"/>
        <end position="734"/>
    </location>
</feature>
<feature type="binding site" evidence="2">
    <location>
        <begin position="230"/>
        <end position="237"/>
    </location>
    <ligand>
        <name>ATP</name>
        <dbReference type="ChEBI" id="CHEBI:30616"/>
    </ligand>
</feature>
<feature type="binding site" evidence="2">
    <location>
        <begin position="503"/>
        <end position="510"/>
    </location>
    <ligand>
        <name>ATP</name>
        <dbReference type="ChEBI" id="CHEBI:30616"/>
    </ligand>
</feature>
<feature type="sequence conflict" description="In Ref. 1; CAA56097." evidence="4" ref="1">
    <original>E</original>
    <variation>D</variation>
    <location>
        <position position="40"/>
    </location>
</feature>